<reference key="1">
    <citation type="book" date="2006" name="Gram positive pathogens, 2nd edition">
        <title>The Staphylococcus aureus NCTC 8325 genome.</title>
        <editorList>
            <person name="Fischetti V."/>
            <person name="Novick R."/>
            <person name="Ferretti J."/>
            <person name="Portnoy D."/>
            <person name="Rood J."/>
        </editorList>
        <authorList>
            <person name="Gillaspy A.F."/>
            <person name="Worrell V."/>
            <person name="Orvis J."/>
            <person name="Roe B.A."/>
            <person name="Dyer D.W."/>
            <person name="Iandolo J.J."/>
        </authorList>
    </citation>
    <scope>NUCLEOTIDE SEQUENCE [LARGE SCALE GENOMIC DNA]</scope>
    <source>
        <strain>NCTC 8325 / PS 47</strain>
    </source>
</reference>
<reference key="2">
    <citation type="journal article" date="2004" name="Mol. Microbiol.">
        <title>Clp ATPases are required for stress tolerance, intracellular replication and biofilm formation in Staphylococcus aureus.</title>
        <authorList>
            <person name="Frees D."/>
            <person name="Chastanet A."/>
            <person name="Qazi S."/>
            <person name="Soerensen K."/>
            <person name="Hill P."/>
            <person name="Msadek T."/>
            <person name="Ingmer H."/>
        </authorList>
    </citation>
    <scope>FUNCTION</scope>
    <scope>INDUCTION</scope>
    <scope>SUBUNIT</scope>
</reference>
<reference key="3">
    <citation type="journal article" date="2012" name="FEMS Microbiol. Lett.">
        <title>McsA and the roles of metal-binding motif in Staphylococcus aureus.</title>
        <authorList>
            <person name="Sitthisak S."/>
            <person name="Kitti T."/>
            <person name="Boonyonying K."/>
            <person name="Wozniak D."/>
            <person name="Mongkolsuk S."/>
            <person name="Jayaswal R.K."/>
        </authorList>
    </citation>
    <scope>INDUCTION</scope>
    <source>
        <strain>SH1000</strain>
    </source>
</reference>
<dbReference type="EMBL" id="CP000253">
    <property type="protein sequence ID" value="ABD29654.1"/>
    <property type="molecule type" value="Genomic_DNA"/>
</dbReference>
<dbReference type="RefSeq" id="WP_000897132.1">
    <property type="nucleotide sequence ID" value="NZ_LS483365.1"/>
</dbReference>
<dbReference type="RefSeq" id="YP_499078.1">
    <property type="nucleotide sequence ID" value="NC_007795.1"/>
</dbReference>
<dbReference type="PDB" id="6EM8">
    <property type="method" value="EM"/>
    <property type="resolution" value="8.40 A"/>
    <property type="chains" value="A/B/C/D/E/F/G/H/I/L=1-818"/>
</dbReference>
<dbReference type="PDBsum" id="6EM8"/>
<dbReference type="SMR" id="Q2G0P5"/>
<dbReference type="STRING" id="93061.SAOUHSC_00505"/>
<dbReference type="PaxDb" id="1280-SAXN108_0578"/>
<dbReference type="GeneID" id="3920417"/>
<dbReference type="KEGG" id="sao:SAOUHSC_00505"/>
<dbReference type="PATRIC" id="fig|93061.5.peg.452"/>
<dbReference type="eggNOG" id="COG0542">
    <property type="taxonomic scope" value="Bacteria"/>
</dbReference>
<dbReference type="HOGENOM" id="CLU_005070_4_1_9"/>
<dbReference type="OrthoDB" id="9803641at2"/>
<dbReference type="PRO" id="PR:Q2G0P5"/>
<dbReference type="Proteomes" id="UP000008816">
    <property type="component" value="Chromosome"/>
</dbReference>
<dbReference type="GO" id="GO:0005524">
    <property type="term" value="F:ATP binding"/>
    <property type="evidence" value="ECO:0007669"/>
    <property type="project" value="UniProtKB-KW"/>
</dbReference>
<dbReference type="GO" id="GO:0016887">
    <property type="term" value="F:ATP hydrolysis activity"/>
    <property type="evidence" value="ECO:0007669"/>
    <property type="project" value="InterPro"/>
</dbReference>
<dbReference type="GO" id="GO:1990170">
    <property type="term" value="P:stress response to cadmium ion"/>
    <property type="evidence" value="ECO:0000314"/>
    <property type="project" value="UniProtKB"/>
</dbReference>
<dbReference type="GO" id="GO:1990169">
    <property type="term" value="P:stress response to copper ion"/>
    <property type="evidence" value="ECO:0000314"/>
    <property type="project" value="UniProtKB"/>
</dbReference>
<dbReference type="CDD" id="cd00009">
    <property type="entry name" value="AAA"/>
    <property type="match status" value="1"/>
</dbReference>
<dbReference type="CDD" id="cd19499">
    <property type="entry name" value="RecA-like_ClpB_Hsp104-like"/>
    <property type="match status" value="1"/>
</dbReference>
<dbReference type="FunFam" id="1.10.8.60:FF:000017">
    <property type="entry name" value="ATP-dependent chaperone ClpB"/>
    <property type="match status" value="1"/>
</dbReference>
<dbReference type="FunFam" id="1.10.8.60:FF:000011">
    <property type="entry name" value="ATP-dependent Clp protease ATP-binding subunit"/>
    <property type="match status" value="1"/>
</dbReference>
<dbReference type="FunFam" id="3.40.50.300:FF:000025">
    <property type="entry name" value="ATP-dependent Clp protease subunit"/>
    <property type="match status" value="1"/>
</dbReference>
<dbReference type="FunFam" id="3.40.50.300:FF:000010">
    <property type="entry name" value="Chaperone clpB 1, putative"/>
    <property type="match status" value="1"/>
</dbReference>
<dbReference type="Gene3D" id="1.10.8.60">
    <property type="match status" value="2"/>
</dbReference>
<dbReference type="Gene3D" id="1.10.1780.10">
    <property type="entry name" value="Clp, N-terminal domain"/>
    <property type="match status" value="1"/>
</dbReference>
<dbReference type="Gene3D" id="3.40.50.300">
    <property type="entry name" value="P-loop containing nucleotide triphosphate hydrolases"/>
    <property type="match status" value="2"/>
</dbReference>
<dbReference type="Gene3D" id="4.10.860.10">
    <property type="entry name" value="UVR domain"/>
    <property type="match status" value="1"/>
</dbReference>
<dbReference type="InterPro" id="IPR003593">
    <property type="entry name" value="AAA+_ATPase"/>
</dbReference>
<dbReference type="InterPro" id="IPR003959">
    <property type="entry name" value="ATPase_AAA_core"/>
</dbReference>
<dbReference type="InterPro" id="IPR019489">
    <property type="entry name" value="Clp_ATPase_C"/>
</dbReference>
<dbReference type="InterPro" id="IPR036628">
    <property type="entry name" value="Clp_N_dom_sf"/>
</dbReference>
<dbReference type="InterPro" id="IPR004176">
    <property type="entry name" value="Clp_R_dom"/>
</dbReference>
<dbReference type="InterPro" id="IPR001270">
    <property type="entry name" value="ClpA/B"/>
</dbReference>
<dbReference type="InterPro" id="IPR018368">
    <property type="entry name" value="ClpA/B_CS1"/>
</dbReference>
<dbReference type="InterPro" id="IPR028299">
    <property type="entry name" value="ClpA/B_CS2"/>
</dbReference>
<dbReference type="InterPro" id="IPR041546">
    <property type="entry name" value="ClpA/ClpB_AAA_lid"/>
</dbReference>
<dbReference type="InterPro" id="IPR050130">
    <property type="entry name" value="ClpA_ClpB"/>
</dbReference>
<dbReference type="InterPro" id="IPR027417">
    <property type="entry name" value="P-loop_NTPase"/>
</dbReference>
<dbReference type="InterPro" id="IPR001943">
    <property type="entry name" value="UVR_dom"/>
</dbReference>
<dbReference type="PANTHER" id="PTHR11638">
    <property type="entry name" value="ATP-DEPENDENT CLP PROTEASE"/>
    <property type="match status" value="1"/>
</dbReference>
<dbReference type="PANTHER" id="PTHR11638:SF18">
    <property type="entry name" value="HEAT SHOCK PROTEIN 104"/>
    <property type="match status" value="1"/>
</dbReference>
<dbReference type="Pfam" id="PF00004">
    <property type="entry name" value="AAA"/>
    <property type="match status" value="1"/>
</dbReference>
<dbReference type="Pfam" id="PF07724">
    <property type="entry name" value="AAA_2"/>
    <property type="match status" value="1"/>
</dbReference>
<dbReference type="Pfam" id="PF17871">
    <property type="entry name" value="AAA_lid_9"/>
    <property type="match status" value="1"/>
</dbReference>
<dbReference type="Pfam" id="PF02861">
    <property type="entry name" value="Clp_N"/>
    <property type="match status" value="2"/>
</dbReference>
<dbReference type="Pfam" id="PF10431">
    <property type="entry name" value="ClpB_D2-small"/>
    <property type="match status" value="1"/>
</dbReference>
<dbReference type="PRINTS" id="PR00300">
    <property type="entry name" value="CLPPROTEASEA"/>
</dbReference>
<dbReference type="SMART" id="SM00382">
    <property type="entry name" value="AAA"/>
    <property type="match status" value="2"/>
</dbReference>
<dbReference type="SMART" id="SM01086">
    <property type="entry name" value="ClpB_D2-small"/>
    <property type="match status" value="1"/>
</dbReference>
<dbReference type="SUPFAM" id="SSF81923">
    <property type="entry name" value="Double Clp-N motif"/>
    <property type="match status" value="1"/>
</dbReference>
<dbReference type="SUPFAM" id="SSF52540">
    <property type="entry name" value="P-loop containing nucleoside triphosphate hydrolases"/>
    <property type="match status" value="2"/>
</dbReference>
<dbReference type="PROSITE" id="PS51903">
    <property type="entry name" value="CLP_R"/>
    <property type="match status" value="1"/>
</dbReference>
<dbReference type="PROSITE" id="PS00870">
    <property type="entry name" value="CLPAB_1"/>
    <property type="match status" value="1"/>
</dbReference>
<dbReference type="PROSITE" id="PS00871">
    <property type="entry name" value="CLPAB_2"/>
    <property type="match status" value="1"/>
</dbReference>
<dbReference type="PROSITE" id="PS50151">
    <property type="entry name" value="UVR"/>
    <property type="match status" value="1"/>
</dbReference>
<accession>Q2G0P5</accession>
<proteinExistence type="evidence at protein level"/>
<keyword id="KW-0002">3D-structure</keyword>
<keyword id="KW-0067">ATP-binding</keyword>
<keyword id="KW-0143">Chaperone</keyword>
<keyword id="KW-0547">Nucleotide-binding</keyword>
<keyword id="KW-1185">Reference proteome</keyword>
<keyword id="KW-0677">Repeat</keyword>
<keyword id="KW-0346">Stress response</keyword>
<keyword id="KW-0843">Virulence</keyword>
<feature type="chain" id="PRO_0000269679" description="ATP-dependent Clp protease ATP-binding subunit ClpC">
    <location>
        <begin position="1"/>
        <end position="818"/>
    </location>
</feature>
<feature type="domain" description="Clp R" evidence="3">
    <location>
        <begin position="3"/>
        <end position="144"/>
    </location>
</feature>
<feature type="domain" description="UVR" evidence="2">
    <location>
        <begin position="417"/>
        <end position="452"/>
    </location>
</feature>
<feature type="region of interest" description="Repeat 1" evidence="3">
    <location>
        <begin position="6"/>
        <end position="71"/>
    </location>
</feature>
<feature type="region of interest" description="Repeat 2" evidence="3">
    <location>
        <begin position="80"/>
        <end position="144"/>
    </location>
</feature>
<feature type="region of interest" description="I">
    <location>
        <begin position="163"/>
        <end position="410"/>
    </location>
</feature>
<feature type="region of interest" description="II">
    <location>
        <begin position="471"/>
        <end position="662"/>
    </location>
</feature>
<feature type="binding site" evidence="1">
    <location>
        <begin position="208"/>
        <end position="215"/>
    </location>
    <ligand>
        <name>ATP</name>
        <dbReference type="ChEBI" id="CHEBI:30616"/>
    </ligand>
</feature>
<feature type="binding site" evidence="1">
    <location>
        <begin position="545"/>
        <end position="552"/>
    </location>
    <ligand>
        <name>ATP</name>
        <dbReference type="ChEBI" id="CHEBI:30616"/>
    </ligand>
</feature>
<sequence length="818" mass="91037">MLFGRLTERAQRVLAHAQEEAIRLNHSNIGTEHLLLGLMKEPEGIAAKVLESFNITEDKVIEEVEKLIGHGQDHVGTLHYTPRAKKVIELSMDEARKLHHNFVGTEHILLGLIRENEGVAARVFANLDLNITKARAQVVKALGNPEMSNKNAQASKSNNTPTLDSLARDLTVIAKDGTLDPVIGRDKEITRVIEVLSRRTKNNPVLIGEPGVGKTAIAEGLAQAIVNNEVPETLKDKRVMSLDMGTVVAGTKYRGEFEERLKKVMEEIQQAGNVILFIDELHTLVGAGGAEGAIDASNILKPALARGELQCIGATTLDEYRKNIEKDAALERRFQPVQVDEPSVVDTVAILKGLRDRYEAHHRINISDEAIEAAVKLSNRYVSDRFLPDKAIDLIDEASSKVRLKSHTTPNNLKEIEQEIEKVKNEKDAAVHAQEFENAANLRDKQTKLEKQYEEAKNEWKNAQNGMSTSLSEEDIAEVIAGWTGIPLTKINETESEKLLSLEDTLHERVIGQKDAVNSISKAVRRARAGLKDPKRPIGSFIFLGPTGVGKTELARALAESMFGDDDAMIRVDMSEFMEKHAVSRLVGAPPGYVGHDDGGQLTEKVRRKPYSVILFDEIEKAHPDVFNILLQVLDDGHLTDTKGRTVDFRNTIIIMTSNVGAQELQDQRFAGFGGSSDGQDYETIRKTMLKELKNSFRPEFLNRVDDIIVFHKLTKEELKEIVTMMVNKLTNRLSEQNINIIVTDKAKDKIAEEGYDPEYGARPLIRAIQKTIEDNLSELILDGNQIEGKKVTVDHDGKEFKYDIAEQTSETKTPSQA</sequence>
<name>CLPC_STAA8</name>
<evidence type="ECO:0000255" key="1"/>
<evidence type="ECO:0000255" key="2">
    <source>
        <dbReference type="PROSITE-ProRule" id="PRU00217"/>
    </source>
</evidence>
<evidence type="ECO:0000255" key="3">
    <source>
        <dbReference type="PROSITE-ProRule" id="PRU01251"/>
    </source>
</evidence>
<evidence type="ECO:0000269" key="4">
    <source>
    </source>
</evidence>
<evidence type="ECO:0000269" key="5">
    <source>
    </source>
</evidence>
<evidence type="ECO:0000305" key="6"/>
<organism>
    <name type="scientific">Staphylococcus aureus (strain NCTC 8325 / PS 47)</name>
    <dbReference type="NCBI Taxonomy" id="93061"/>
    <lineage>
        <taxon>Bacteria</taxon>
        <taxon>Bacillati</taxon>
        <taxon>Bacillota</taxon>
        <taxon>Bacilli</taxon>
        <taxon>Bacillales</taxon>
        <taxon>Staphylococcaceae</taxon>
        <taxon>Staphylococcus</taxon>
    </lineage>
</organism>
<gene>
    <name type="primary">clpC</name>
    <name type="ordered locus">SAOUHSC_00505</name>
</gene>
<comment type="function">
    <text evidence="4">Required for growth at high temperatures, probably by acting as a chaperone during heat shock and targeting heat-denatured proteins for degradation by ClpP. Required for biofilm formation. May act as a chaperone regulating CtsR activity.</text>
</comment>
<comment type="subunit">
    <text evidence="4">May interact with ClpP.</text>
</comment>
<comment type="induction">
    <text evidence="4 5">By heat shock. Transcriptionally regulated by CtsR (PubMed:15554981). Up-regulated by heavy metals such as Cu(2+) and Cd(2+), but Zn(2+) and Co(2+) have no effect (PubMed:22126623). Forms part of an operon with ctsR, mcsA and mcsB.</text>
</comment>
<comment type="similarity">
    <text evidence="6">Belongs to the ClpA/ClpB family. ClpC subfamily.</text>
</comment>
<protein>
    <recommendedName>
        <fullName>ATP-dependent Clp protease ATP-binding subunit ClpC</fullName>
    </recommendedName>
</protein>